<gene>
    <name type="ordered locus">BRE_247</name>
</gene>
<comment type="function">
    <text evidence="1">Pyrophosphatase that catalyzes the hydrolysis of nucleoside triphosphates to their monophosphate derivatives, with a high preference for the non-canonical purine nucleotides XTP (xanthosine triphosphate), dITP (deoxyinosine triphosphate) and ITP. Seems to function as a house-cleaning enzyme that removes non-canonical purine nucleotides from the nucleotide pool, thus preventing their incorporation into DNA/RNA and avoiding chromosomal lesions.</text>
</comment>
<comment type="catalytic activity">
    <reaction evidence="1">
        <text>XTP + H2O = XMP + diphosphate + H(+)</text>
        <dbReference type="Rhea" id="RHEA:28610"/>
        <dbReference type="ChEBI" id="CHEBI:15377"/>
        <dbReference type="ChEBI" id="CHEBI:15378"/>
        <dbReference type="ChEBI" id="CHEBI:33019"/>
        <dbReference type="ChEBI" id="CHEBI:57464"/>
        <dbReference type="ChEBI" id="CHEBI:61314"/>
        <dbReference type="EC" id="3.6.1.66"/>
    </reaction>
</comment>
<comment type="catalytic activity">
    <reaction evidence="1">
        <text>dITP + H2O = dIMP + diphosphate + H(+)</text>
        <dbReference type="Rhea" id="RHEA:28342"/>
        <dbReference type="ChEBI" id="CHEBI:15377"/>
        <dbReference type="ChEBI" id="CHEBI:15378"/>
        <dbReference type="ChEBI" id="CHEBI:33019"/>
        <dbReference type="ChEBI" id="CHEBI:61194"/>
        <dbReference type="ChEBI" id="CHEBI:61382"/>
        <dbReference type="EC" id="3.6.1.66"/>
    </reaction>
</comment>
<comment type="catalytic activity">
    <reaction evidence="1">
        <text>ITP + H2O = IMP + diphosphate + H(+)</text>
        <dbReference type="Rhea" id="RHEA:29399"/>
        <dbReference type="ChEBI" id="CHEBI:15377"/>
        <dbReference type="ChEBI" id="CHEBI:15378"/>
        <dbReference type="ChEBI" id="CHEBI:33019"/>
        <dbReference type="ChEBI" id="CHEBI:58053"/>
        <dbReference type="ChEBI" id="CHEBI:61402"/>
        <dbReference type="EC" id="3.6.1.66"/>
    </reaction>
</comment>
<comment type="cofactor">
    <cofactor evidence="1">
        <name>Mg(2+)</name>
        <dbReference type="ChEBI" id="CHEBI:18420"/>
    </cofactor>
    <text evidence="1">Binds 1 Mg(2+) ion per subunit.</text>
</comment>
<comment type="subunit">
    <text evidence="1">Homodimer.</text>
</comment>
<comment type="similarity">
    <text evidence="1">Belongs to the HAM1 NTPase family.</text>
</comment>
<evidence type="ECO:0000255" key="1">
    <source>
        <dbReference type="HAMAP-Rule" id="MF_01405"/>
    </source>
</evidence>
<protein>
    <recommendedName>
        <fullName evidence="1">dITP/XTP pyrophosphatase</fullName>
        <ecNumber evidence="1">3.6.1.66</ecNumber>
    </recommendedName>
    <alternativeName>
        <fullName evidence="1">Non-canonical purine NTP pyrophosphatase</fullName>
    </alternativeName>
    <alternativeName>
        <fullName evidence="1">Non-standard purine NTP pyrophosphatase</fullName>
    </alternativeName>
    <alternativeName>
        <fullName evidence="1">Nucleoside-triphosphate diphosphatase</fullName>
    </alternativeName>
    <alternativeName>
        <fullName evidence="1">Nucleoside-triphosphate pyrophosphatase</fullName>
        <shortName evidence="1">NTPase</shortName>
    </alternativeName>
</protein>
<accession>B5RR63</accession>
<reference key="1">
    <citation type="journal article" date="2008" name="PLoS Genet.">
        <title>The genome of Borrelia recurrentis, the agent of deadly louse-borne relapsing fever, is a degraded subset of tick-borne Borrelia duttonii.</title>
        <authorList>
            <person name="Lescot M."/>
            <person name="Audic S."/>
            <person name="Robert C."/>
            <person name="Nguyen T.T."/>
            <person name="Blanc G."/>
            <person name="Cutler S.J."/>
            <person name="Wincker P."/>
            <person name="Couloux A."/>
            <person name="Claverie J.-M."/>
            <person name="Raoult D."/>
            <person name="Drancourt M."/>
        </authorList>
    </citation>
    <scope>NUCLEOTIDE SEQUENCE [LARGE SCALE GENOMIC DNA]</scope>
    <source>
        <strain>A1</strain>
    </source>
</reference>
<name>IXTPA_BORRA</name>
<feature type="chain" id="PRO_1000145483" description="dITP/XTP pyrophosphatase">
    <location>
        <begin position="1"/>
        <end position="199"/>
    </location>
</feature>
<feature type="active site" description="Proton acceptor" evidence="1">
    <location>
        <position position="68"/>
    </location>
</feature>
<feature type="binding site" evidence="1">
    <location>
        <begin position="8"/>
        <end position="13"/>
    </location>
    <ligand>
        <name>substrate</name>
    </ligand>
</feature>
<feature type="binding site" evidence="1">
    <location>
        <position position="68"/>
    </location>
    <ligand>
        <name>Mg(2+)</name>
        <dbReference type="ChEBI" id="CHEBI:18420"/>
    </ligand>
</feature>
<feature type="binding site" evidence="1">
    <location>
        <position position="69"/>
    </location>
    <ligand>
        <name>substrate</name>
    </ligand>
</feature>
<feature type="binding site" evidence="1">
    <location>
        <begin position="155"/>
        <end position="158"/>
    </location>
    <ligand>
        <name>substrate</name>
    </ligand>
</feature>
<feature type="binding site" evidence="1">
    <location>
        <position position="177"/>
    </location>
    <ligand>
        <name>substrate</name>
    </ligand>
</feature>
<feature type="binding site" evidence="1">
    <location>
        <begin position="182"/>
        <end position="183"/>
    </location>
    <ligand>
        <name>substrate</name>
    </ligand>
</feature>
<organism>
    <name type="scientific">Borrelia recurrentis (strain A1)</name>
    <dbReference type="NCBI Taxonomy" id="412418"/>
    <lineage>
        <taxon>Bacteria</taxon>
        <taxon>Pseudomonadati</taxon>
        <taxon>Spirochaetota</taxon>
        <taxon>Spirochaetia</taxon>
        <taxon>Spirochaetales</taxon>
        <taxon>Borreliaceae</taxon>
        <taxon>Borrelia</taxon>
    </lineage>
</organism>
<dbReference type="EC" id="3.6.1.66" evidence="1"/>
<dbReference type="EMBL" id="CP000993">
    <property type="protein sequence ID" value="ACH94497.1"/>
    <property type="molecule type" value="Genomic_DNA"/>
</dbReference>
<dbReference type="RefSeq" id="WP_012538766.1">
    <property type="nucleotide sequence ID" value="NC_011244.1"/>
</dbReference>
<dbReference type="SMR" id="B5RR63"/>
<dbReference type="KEGG" id="bre:BRE_247"/>
<dbReference type="HOGENOM" id="CLU_082080_0_2_12"/>
<dbReference type="Proteomes" id="UP000000612">
    <property type="component" value="Chromosome"/>
</dbReference>
<dbReference type="GO" id="GO:0005829">
    <property type="term" value="C:cytosol"/>
    <property type="evidence" value="ECO:0007669"/>
    <property type="project" value="TreeGrafter"/>
</dbReference>
<dbReference type="GO" id="GO:0035870">
    <property type="term" value="F:dITP diphosphatase activity"/>
    <property type="evidence" value="ECO:0007669"/>
    <property type="project" value="RHEA"/>
</dbReference>
<dbReference type="GO" id="GO:0036220">
    <property type="term" value="F:ITP diphosphatase activity"/>
    <property type="evidence" value="ECO:0007669"/>
    <property type="project" value="UniProtKB-EC"/>
</dbReference>
<dbReference type="GO" id="GO:0046872">
    <property type="term" value="F:metal ion binding"/>
    <property type="evidence" value="ECO:0007669"/>
    <property type="project" value="UniProtKB-KW"/>
</dbReference>
<dbReference type="GO" id="GO:0000166">
    <property type="term" value="F:nucleotide binding"/>
    <property type="evidence" value="ECO:0007669"/>
    <property type="project" value="UniProtKB-KW"/>
</dbReference>
<dbReference type="GO" id="GO:0017111">
    <property type="term" value="F:ribonucleoside triphosphate phosphatase activity"/>
    <property type="evidence" value="ECO:0007669"/>
    <property type="project" value="InterPro"/>
</dbReference>
<dbReference type="GO" id="GO:0036222">
    <property type="term" value="F:XTP diphosphatase activity"/>
    <property type="evidence" value="ECO:0007669"/>
    <property type="project" value="RHEA"/>
</dbReference>
<dbReference type="GO" id="GO:0009117">
    <property type="term" value="P:nucleotide metabolic process"/>
    <property type="evidence" value="ECO:0007669"/>
    <property type="project" value="UniProtKB-KW"/>
</dbReference>
<dbReference type="GO" id="GO:0009146">
    <property type="term" value="P:purine nucleoside triphosphate catabolic process"/>
    <property type="evidence" value="ECO:0007669"/>
    <property type="project" value="UniProtKB-UniRule"/>
</dbReference>
<dbReference type="CDD" id="cd00515">
    <property type="entry name" value="HAM1"/>
    <property type="match status" value="1"/>
</dbReference>
<dbReference type="FunFam" id="3.90.950.10:FF:000001">
    <property type="entry name" value="dITP/XTP pyrophosphatase"/>
    <property type="match status" value="1"/>
</dbReference>
<dbReference type="Gene3D" id="3.90.950.10">
    <property type="match status" value="1"/>
</dbReference>
<dbReference type="HAMAP" id="MF_01405">
    <property type="entry name" value="Non_canon_purine_NTPase"/>
    <property type="match status" value="1"/>
</dbReference>
<dbReference type="InterPro" id="IPR020922">
    <property type="entry name" value="dITP/XTP_pyrophosphatase"/>
</dbReference>
<dbReference type="InterPro" id="IPR029001">
    <property type="entry name" value="ITPase-like_fam"/>
</dbReference>
<dbReference type="InterPro" id="IPR002637">
    <property type="entry name" value="RdgB/HAM1"/>
</dbReference>
<dbReference type="NCBIfam" id="NF011400">
    <property type="entry name" value="PRK14825.1"/>
    <property type="match status" value="1"/>
</dbReference>
<dbReference type="NCBIfam" id="TIGR00042">
    <property type="entry name" value="RdgB/HAM1 family non-canonical purine NTP pyrophosphatase"/>
    <property type="match status" value="1"/>
</dbReference>
<dbReference type="PANTHER" id="PTHR11067:SF9">
    <property type="entry name" value="INOSINE TRIPHOSPHATE PYROPHOSPHATASE"/>
    <property type="match status" value="1"/>
</dbReference>
<dbReference type="PANTHER" id="PTHR11067">
    <property type="entry name" value="INOSINE TRIPHOSPHATE PYROPHOSPHATASE/HAM1 PROTEIN"/>
    <property type="match status" value="1"/>
</dbReference>
<dbReference type="Pfam" id="PF01725">
    <property type="entry name" value="Ham1p_like"/>
    <property type="match status" value="1"/>
</dbReference>
<dbReference type="SUPFAM" id="SSF52972">
    <property type="entry name" value="ITPase-like"/>
    <property type="match status" value="1"/>
</dbReference>
<sequence length="199" mass="23167">MKTLFFATSNINKINEVKQILDIPKIKIEIPQNFDIKETGKTFKENSLLKAKALFKILNNKQPVFSEDSGLCIEALNMEPGIYSKRYDQYKLGKKLDNNEKNHLIIDLMREQNNRTAYFICVISYIDVDGTINNFEGMLKGTIALNIDYYQKNGFGYNPIFLTTNNKRLSELNLEEKNKISHRGIAFDKFKKFLMQFLD</sequence>
<proteinExistence type="inferred from homology"/>
<keyword id="KW-0378">Hydrolase</keyword>
<keyword id="KW-0460">Magnesium</keyword>
<keyword id="KW-0479">Metal-binding</keyword>
<keyword id="KW-0546">Nucleotide metabolism</keyword>
<keyword id="KW-0547">Nucleotide-binding</keyword>